<protein>
    <recommendedName>
        <fullName evidence="4">ATP synthase F(1) complex subunit delta, mitochondrial</fullName>
    </recommendedName>
    <alternativeName>
        <fullName evidence="4">ATP synthase F1 subunit delta</fullName>
    </alternativeName>
    <alternativeName>
        <fullName>F-ATPase delta subunit</fullName>
    </alternativeName>
</protein>
<keyword id="KW-0066">ATP synthesis</keyword>
<keyword id="KW-0139">CF(1)</keyword>
<keyword id="KW-0375">Hydrogen ion transport</keyword>
<keyword id="KW-0406">Ion transport</keyword>
<keyword id="KW-0472">Membrane</keyword>
<keyword id="KW-0496">Mitochondrion</keyword>
<keyword id="KW-0999">Mitochondrion inner membrane</keyword>
<keyword id="KW-1185">Reference proteome</keyword>
<keyword id="KW-0809">Transit peptide</keyword>
<keyword id="KW-0813">Transport</keyword>
<gene>
    <name evidence="4" type="primary">ATP5F1D</name>
    <name type="synonym">ATP5D</name>
</gene>
<feature type="transit peptide" description="Mitochondrion" evidence="1">
    <location>
        <begin position="1"/>
        <end position="22"/>
    </location>
</feature>
<feature type="chain" id="PRO_0000002663" description="ATP synthase F(1) complex subunit delta, mitochondrial">
    <location>
        <begin position="23"/>
        <end position="80" status="greater than"/>
    </location>
</feature>
<feature type="non-terminal residue">
    <location>
        <position position="80"/>
    </location>
</feature>
<accession>Q95312</accession>
<evidence type="ECO:0000250" key="1"/>
<evidence type="ECO:0000250" key="2">
    <source>
        <dbReference type="UniProtKB" id="P05630"/>
    </source>
</evidence>
<evidence type="ECO:0000250" key="3">
    <source>
        <dbReference type="UniProtKB" id="P19483"/>
    </source>
</evidence>
<evidence type="ECO:0000250" key="4">
    <source>
        <dbReference type="UniProtKB" id="P30049"/>
    </source>
</evidence>
<evidence type="ECO:0000305" key="5"/>
<reference key="1">
    <citation type="submission" date="1996-10" db="EMBL/GenBank/DDBJ databases">
        <title>Evaluation and characterization of a porcine small intestine cDNA library.</title>
        <authorList>
            <person name="Winteroe A.K."/>
            <person name="Fredholm M."/>
            <person name="Davies W."/>
        </authorList>
    </citation>
    <scope>NUCLEOTIDE SEQUENCE [LARGE SCALE MRNA]</scope>
    <source>
        <tissue>Small intestine</tissue>
    </source>
</reference>
<organism>
    <name type="scientific">Sus scrofa</name>
    <name type="common">Pig</name>
    <dbReference type="NCBI Taxonomy" id="9823"/>
    <lineage>
        <taxon>Eukaryota</taxon>
        <taxon>Metazoa</taxon>
        <taxon>Chordata</taxon>
        <taxon>Craniata</taxon>
        <taxon>Vertebrata</taxon>
        <taxon>Euteleostomi</taxon>
        <taxon>Mammalia</taxon>
        <taxon>Eutheria</taxon>
        <taxon>Laurasiatheria</taxon>
        <taxon>Artiodactyla</taxon>
        <taxon>Suina</taxon>
        <taxon>Suidae</taxon>
        <taxon>Sus</taxon>
    </lineage>
</organism>
<comment type="function">
    <text evidence="3 4">Subunit delta, of the mitochondrial membrane ATP synthase complex (F(1)F(0) ATP synthase or Complex V) that produces ATP from ADP in the presence of a proton gradient across the membrane which is generated by electron transport complexes of the respiratory chain. ATP synthase complex consist of a soluble F(1) head domain - the catalytic core - and a membrane F(1) domain - the membrane proton channel. These two domains are linked by a central stalk rotating inside the F(1) region and a stationary peripheral stalk. During catalysis, ATP synthesis in the catalytic domain of F(1) is coupled via a rotary mechanism of the central stalk subunits to proton translocation (By similarity). In vivo, can only synthesize ATP although its ATP hydrolase activity can be activated artificially in vitro (By similarity). With the central stalk subunit gamma, is essential for the biogenesis of F(1) catalytic part of the ATP synthase complex namely in the formation of F1 assembly intermediate (By similarity).</text>
</comment>
<comment type="subunit">
    <text evidence="2 4">Component of the ATP synthase complex composed at least of ATP5F1A/subunit alpha, ATP5F1B/subunit beta, ATP5MC1/subunit c (homooctomer), MT-ATP6/subunit a, MT-ATP8/subunit 8, ATP5ME/subunit e, ATP5MF/subunit f, ATP5MG/subunit g, ATP5MK/subunit k, ATP5MJ/subunit j, ATP5F1C/subunit gamma, ATP5F1D/subunit delta, ATP5F1E/subunit epsilon, ATP5PF/subunit F6, ATP5PB/subunit b, ATP5PD/subunit d, ATP5PO/subunit OSCP. ATP synthase complex consists of a soluble F(1) head domain (subunits alpha(3) and beta(3)) - the catalytic core - and a membrane F(0) domain - the membrane proton channel (subunits c, a, 8, e, f, g, k and j). These two domains are linked by a central stalk (subunits gamma, delta, and epsilon) rotating inside the F1 region and a stationary peripheral stalk (subunits F6, b, d, and OSCP) (By similarity). Component of a complex composed at least by ATPIF1, ATP5F1A, ATP5F1B, ATP5F1C AND ATP5F1E (By similarity).</text>
</comment>
<comment type="subcellular location">
    <subcellularLocation>
        <location>Mitochondrion</location>
    </subcellularLocation>
    <subcellularLocation>
        <location>Mitochondrion inner membrane</location>
    </subcellularLocation>
</comment>
<comment type="similarity">
    <text evidence="5">Belongs to the ATPase epsilon chain family.</text>
</comment>
<name>ATPD_PIG</name>
<dbReference type="EMBL" id="Z81163">
    <property type="protein sequence ID" value="CAB03549.1"/>
    <property type="molecule type" value="mRNA"/>
</dbReference>
<dbReference type="STRING" id="9823.ENSSSCP00000074180"/>
<dbReference type="PaxDb" id="9823-ENSSSCP00000014280"/>
<dbReference type="eggNOG" id="KOG1758">
    <property type="taxonomic scope" value="Eukaryota"/>
</dbReference>
<dbReference type="InParanoid" id="Q95312"/>
<dbReference type="Proteomes" id="UP000008227">
    <property type="component" value="Unplaced"/>
</dbReference>
<dbReference type="Proteomes" id="UP000314985">
    <property type="component" value="Unplaced"/>
</dbReference>
<dbReference type="Proteomes" id="UP000694570">
    <property type="component" value="Unplaced"/>
</dbReference>
<dbReference type="Proteomes" id="UP000694571">
    <property type="component" value="Unplaced"/>
</dbReference>
<dbReference type="Proteomes" id="UP000694720">
    <property type="component" value="Unplaced"/>
</dbReference>
<dbReference type="Proteomes" id="UP000694722">
    <property type="component" value="Unplaced"/>
</dbReference>
<dbReference type="Proteomes" id="UP000694723">
    <property type="component" value="Unplaced"/>
</dbReference>
<dbReference type="Proteomes" id="UP000694724">
    <property type="component" value="Unplaced"/>
</dbReference>
<dbReference type="Proteomes" id="UP000694725">
    <property type="component" value="Unplaced"/>
</dbReference>
<dbReference type="Proteomes" id="UP000694726">
    <property type="component" value="Unplaced"/>
</dbReference>
<dbReference type="Proteomes" id="UP000694727">
    <property type="component" value="Unplaced"/>
</dbReference>
<dbReference type="Proteomes" id="UP000694728">
    <property type="component" value="Unplaced"/>
</dbReference>
<dbReference type="GO" id="GO:0005743">
    <property type="term" value="C:mitochondrial inner membrane"/>
    <property type="evidence" value="ECO:0007669"/>
    <property type="project" value="UniProtKB-SubCell"/>
</dbReference>
<dbReference type="GO" id="GO:0045259">
    <property type="term" value="C:proton-transporting ATP synthase complex"/>
    <property type="evidence" value="ECO:0000250"/>
    <property type="project" value="UniProtKB"/>
</dbReference>
<dbReference type="GO" id="GO:0046933">
    <property type="term" value="F:proton-transporting ATP synthase activity, rotational mechanism"/>
    <property type="evidence" value="ECO:0007669"/>
    <property type="project" value="InterPro"/>
</dbReference>
<dbReference type="GO" id="GO:0005198">
    <property type="term" value="F:structural molecule activity"/>
    <property type="evidence" value="ECO:0000250"/>
    <property type="project" value="UniProtKB"/>
</dbReference>
<dbReference type="GO" id="GO:0009060">
    <property type="term" value="P:aerobic respiration"/>
    <property type="evidence" value="ECO:0000250"/>
    <property type="project" value="UniProtKB"/>
</dbReference>
<dbReference type="GO" id="GO:0033615">
    <property type="term" value="P:mitochondrial proton-transporting ATP synthase complex assembly"/>
    <property type="evidence" value="ECO:0000250"/>
    <property type="project" value="UniProtKB"/>
</dbReference>
<dbReference type="Gene3D" id="2.60.15.10">
    <property type="entry name" value="F0F1 ATP synthase delta/epsilon subunit, N-terminal"/>
    <property type="match status" value="1"/>
</dbReference>
<dbReference type="InterPro" id="IPR001469">
    <property type="entry name" value="ATP_synth_F1_dsu/esu"/>
</dbReference>
<dbReference type="InterPro" id="IPR020546">
    <property type="entry name" value="ATP_synth_F1_dsu/esu_N"/>
</dbReference>
<dbReference type="InterPro" id="IPR036771">
    <property type="entry name" value="ATPsynth_dsu/esu_N"/>
</dbReference>
<dbReference type="PANTHER" id="PTHR13822">
    <property type="entry name" value="ATP SYNTHASE DELTA/EPSILON CHAIN"/>
    <property type="match status" value="1"/>
</dbReference>
<dbReference type="PANTHER" id="PTHR13822:SF7">
    <property type="entry name" value="ATP SYNTHASE SUBUNIT DELTA, MITOCHONDRIAL"/>
    <property type="match status" value="1"/>
</dbReference>
<dbReference type="Pfam" id="PF02823">
    <property type="entry name" value="ATP-synt_DE_N"/>
    <property type="match status" value="1"/>
</dbReference>
<dbReference type="SUPFAM" id="SSF51344">
    <property type="entry name" value="Epsilon subunit of F1F0-ATP synthase N-terminal domain"/>
    <property type="match status" value="1"/>
</dbReference>
<proteinExistence type="evidence at transcript level"/>
<sequence>MLPATLLRXSGLGRVVRQARAYXEAAAAPXSAAGPGXMSFTFASPTQVFFNGANVRQVDVPTQTGAFGILASHVPTLQVL</sequence>